<sequence length="229" mass="27054">MAKKKAFSPIFHLSFIVFLPWGIYLSFKKCLGSWITNWWNTSESEIFLNIIQEKSILENFIELEEFLFVEEIFKNNSETHPQEFHTGIHKEAIQFIKIQNESYIHMILRLSTNLICVVIISGFYIWRNETLVILNSWSREFLYNLSDTVKVFSILLLTDLCIGFHSPHGWELMIGSIYKDFGFVQNDRIISGLVSTFPVILDTIFKYWIFRYLNRVSPSLVVIYHSMND</sequence>
<organism>
    <name type="scientific">Cuscuta reflexa</name>
    <name type="common">Southern Asian dodder</name>
    <dbReference type="NCBI Taxonomy" id="4129"/>
    <lineage>
        <taxon>Eukaryota</taxon>
        <taxon>Viridiplantae</taxon>
        <taxon>Streptophyta</taxon>
        <taxon>Embryophyta</taxon>
        <taxon>Tracheophyta</taxon>
        <taxon>Spermatophyta</taxon>
        <taxon>Magnoliopsida</taxon>
        <taxon>eudicotyledons</taxon>
        <taxon>Gunneridae</taxon>
        <taxon>Pentapetalae</taxon>
        <taxon>asterids</taxon>
        <taxon>lamiids</taxon>
        <taxon>Solanales</taxon>
        <taxon>Convolvulaceae</taxon>
        <taxon>Cuscuteae</taxon>
        <taxon>Cuscuta</taxon>
        <taxon>Cuscuta subgen. Monogynella</taxon>
    </lineage>
</organism>
<accession>A7M974</accession>
<gene>
    <name evidence="1" type="primary">cemA</name>
</gene>
<keyword id="KW-0375">Hydrogen ion transport</keyword>
<keyword id="KW-0406">Ion transport</keyword>
<keyword id="KW-0472">Membrane</keyword>
<keyword id="KW-0934">Plastid</keyword>
<keyword id="KW-0812">Transmembrane</keyword>
<keyword id="KW-1133">Transmembrane helix</keyword>
<keyword id="KW-0813">Transport</keyword>
<dbReference type="EMBL" id="AM711640">
    <property type="protein sequence ID" value="CAM98402.1"/>
    <property type="molecule type" value="Genomic_DNA"/>
</dbReference>
<dbReference type="RefSeq" id="YP_001430116.1">
    <property type="nucleotide sequence ID" value="NC_009766.1"/>
</dbReference>
<dbReference type="GeneID" id="5536610"/>
<dbReference type="GO" id="GO:0042170">
    <property type="term" value="C:plastid membrane"/>
    <property type="evidence" value="ECO:0007669"/>
    <property type="project" value="UniProtKB-SubCell"/>
</dbReference>
<dbReference type="GO" id="GO:1902600">
    <property type="term" value="P:proton transmembrane transport"/>
    <property type="evidence" value="ECO:0007669"/>
    <property type="project" value="UniProtKB-KW"/>
</dbReference>
<dbReference type="HAMAP" id="MF_01308">
    <property type="entry name" value="CemA_PxcA"/>
    <property type="match status" value="1"/>
</dbReference>
<dbReference type="InterPro" id="IPR004282">
    <property type="entry name" value="CemA"/>
</dbReference>
<dbReference type="PANTHER" id="PTHR33650:SF2">
    <property type="entry name" value="CHLOROPLAST ENVELOPE MEMBRANE PROTEIN"/>
    <property type="match status" value="1"/>
</dbReference>
<dbReference type="PANTHER" id="PTHR33650">
    <property type="entry name" value="CHLOROPLAST ENVELOPE MEMBRANE PROTEIN-RELATED"/>
    <property type="match status" value="1"/>
</dbReference>
<dbReference type="Pfam" id="PF03040">
    <property type="entry name" value="CemA"/>
    <property type="match status" value="1"/>
</dbReference>
<comment type="function">
    <text evidence="2">May be involved in proton extrusion.</text>
</comment>
<comment type="catalytic activity">
    <reaction evidence="1">
        <text>K(+)(in) + H(+)(out) = K(+)(out) + H(+)(in)</text>
        <dbReference type="Rhea" id="RHEA:29467"/>
        <dbReference type="ChEBI" id="CHEBI:15378"/>
        <dbReference type="ChEBI" id="CHEBI:29103"/>
    </reaction>
</comment>
<comment type="subcellular location">
    <subcellularLocation>
        <location evidence="2">Plastid membrane</location>
        <topology evidence="1">Multi-pass membrane protein</topology>
    </subcellularLocation>
</comment>
<comment type="similarity">
    <text evidence="1">Belongs to the CemA family.</text>
</comment>
<comment type="caution">
    <text evidence="2">Young tissue from this organism is photosynthetic and contains some thylakoids, although the photosynthetic activity does not exceed the light compensation point.</text>
</comment>
<feature type="chain" id="PRO_0000323241" description="Potassium/proton antiporter CemA">
    <location>
        <begin position="1"/>
        <end position="229"/>
    </location>
</feature>
<feature type="transmembrane region" description="Helical" evidence="1">
    <location>
        <begin position="7"/>
        <end position="27"/>
    </location>
</feature>
<feature type="transmembrane region" description="Helical" evidence="1">
    <location>
        <begin position="106"/>
        <end position="126"/>
    </location>
</feature>
<feature type="transmembrane region" description="Helical" evidence="1">
    <location>
        <begin position="189"/>
        <end position="209"/>
    </location>
</feature>
<protein>
    <recommendedName>
        <fullName evidence="1">Potassium/proton antiporter CemA</fullName>
    </recommendedName>
    <alternativeName>
        <fullName evidence="2">Plastid envelope membrane protein A</fullName>
    </alternativeName>
</protein>
<reference key="1">
    <citation type="journal article" date="2007" name="BMC Plant Biol.">
        <title>Complete DNA sequences of the plastid genomes of two parasitic flowering plant species, Cuscuta reflexa and Cuscuta gronovii.</title>
        <authorList>
            <person name="Funk H.T."/>
            <person name="Berg S."/>
            <person name="Krupinska K."/>
            <person name="Maier U.-G."/>
            <person name="Krause K."/>
        </authorList>
    </citation>
    <scope>NUCLEOTIDE SEQUENCE [LARGE SCALE GENOMIC DNA]</scope>
</reference>
<geneLocation type="plastid"/>
<name>CEMA_CUSRE</name>
<proteinExistence type="inferred from homology"/>
<evidence type="ECO:0000255" key="1">
    <source>
        <dbReference type="HAMAP-Rule" id="MF_01308"/>
    </source>
</evidence>
<evidence type="ECO:0000305" key="2"/>